<keyword id="KW-0025">Alternative splicing</keyword>
<keyword id="KW-0966">Cell projection</keyword>
<keyword id="KW-0378">Hydrolase</keyword>
<keyword id="KW-0479">Metal-binding</keyword>
<keyword id="KW-0482">Metalloprotease</keyword>
<keyword id="KW-0496">Mitochondrion</keyword>
<keyword id="KW-0597">Phosphoprotein</keyword>
<keyword id="KW-0645">Protease</keyword>
<keyword id="KW-1267">Proteomics identification</keyword>
<keyword id="KW-1185">Reference proteome</keyword>
<keyword id="KW-0732">Signal</keyword>
<keyword id="KW-0862">Zinc</keyword>
<organism>
    <name type="scientific">Homo sapiens</name>
    <name type="common">Human</name>
    <dbReference type="NCBI Taxonomy" id="9606"/>
    <lineage>
        <taxon>Eukaryota</taxon>
        <taxon>Metazoa</taxon>
        <taxon>Chordata</taxon>
        <taxon>Craniata</taxon>
        <taxon>Vertebrata</taxon>
        <taxon>Euteleostomi</taxon>
        <taxon>Mammalia</taxon>
        <taxon>Eutheria</taxon>
        <taxon>Euarchontoglires</taxon>
        <taxon>Primates</taxon>
        <taxon>Haplorrhini</taxon>
        <taxon>Catarrhini</taxon>
        <taxon>Hominidae</taxon>
        <taxon>Homo</taxon>
    </lineage>
</organism>
<feature type="signal peptide" evidence="3">
    <location>
        <begin position="1"/>
        <end position="20"/>
    </location>
</feature>
<feature type="chain" id="PRO_0000026755" description="Nardilysin">
    <location>
        <begin position="21"/>
        <end position="1151"/>
    </location>
</feature>
<feature type="region of interest" description="Disordered" evidence="5">
    <location>
        <begin position="53"/>
        <end position="108"/>
    </location>
</feature>
<feature type="region of interest" description="Disordered" evidence="5">
    <location>
        <begin position="133"/>
        <end position="207"/>
    </location>
</feature>
<feature type="compositionally biased region" description="Acidic residues" evidence="5">
    <location>
        <begin position="141"/>
        <end position="198"/>
    </location>
</feature>
<feature type="active site" description="Proton acceptor" evidence="4">
    <location>
        <position position="236"/>
    </location>
</feature>
<feature type="binding site" evidence="4">
    <location>
        <position position="233"/>
    </location>
    <ligand>
        <name>Zn(2+)</name>
        <dbReference type="ChEBI" id="CHEBI:29105"/>
    </ligand>
</feature>
<feature type="binding site" evidence="4">
    <location>
        <position position="237"/>
    </location>
    <ligand>
        <name>Zn(2+)</name>
        <dbReference type="ChEBI" id="CHEBI:29105"/>
    </ligand>
</feature>
<feature type="binding site" evidence="4">
    <location>
        <position position="314"/>
    </location>
    <ligand>
        <name>Zn(2+)</name>
        <dbReference type="ChEBI" id="CHEBI:29105"/>
    </ligand>
</feature>
<feature type="modified residue" description="Phosphoserine" evidence="15">
    <location>
        <position position="86"/>
    </location>
</feature>
<feature type="modified residue" description="Phosphoserine" evidence="11 12 13 14 15">
    <location>
        <position position="94"/>
    </location>
</feature>
<feature type="modified residue" description="Phosphoserine" evidence="15">
    <location>
        <position position="96"/>
    </location>
</feature>
<feature type="splice variant" id="VSP_007114" description="In isoform 2." evidence="8">
    <original>Q</original>
    <variation>QQLQSLFLLWSKLTDRLWFKSTYSKMSSTLLVETRNLYGVVGAESRSAPVQHLAGWQAEEQQGETDTVL</variation>
    <location>
        <position position="210"/>
    </location>
</feature>
<feature type="sequence variant" id="VAR_080827" evidence="7">
    <location>
        <position position="154"/>
    </location>
</feature>
<feature type="sequence variant" id="VAR_057058" description="In dbSNP:rs34957144.">
    <original>Y</original>
    <variation>S</variation>
    <location>
        <position position="832"/>
    </location>
</feature>
<feature type="sequence conflict" description="In Ref. 1; CAA63698/CAA63694." evidence="9" ref="1">
    <original>EL</original>
    <variation>DV</variation>
    <location>
        <begin position="23"/>
        <end position="24"/>
    </location>
</feature>
<feature type="sequence conflict" description="In Ref. 1; CAA63698/CAA63694." evidence="9" ref="1">
    <original>Q</original>
    <variation>L</variation>
    <location>
        <position position="527"/>
    </location>
</feature>
<feature type="sequence conflict" description="In Ref. 2; AAC39597." evidence="9" ref="2">
    <original>A</original>
    <variation>G</variation>
    <location>
        <position position="641"/>
    </location>
</feature>
<feature type="sequence conflict" description="In Ref. 1; CAA63698/CAA63694." evidence="9" ref="1">
    <original>V</original>
    <variation>A</variation>
    <location>
        <position position="753"/>
    </location>
</feature>
<feature type="sequence conflict" description="In Ref. 2; AAC39597." evidence="9" ref="2">
    <original>V</original>
    <variation>A</variation>
    <location>
        <position position="1087"/>
    </location>
</feature>
<feature type="sequence conflict" description="In Ref. 1; CAA63698/CAA63694." evidence="9" ref="1">
    <original>T</original>
    <variation>S</variation>
    <location>
        <position position="1100"/>
    </location>
</feature>
<feature type="sequence conflict" description="In Ref. 2; AAC39597." evidence="9" ref="2">
    <original>D</original>
    <variation>S</variation>
    <location>
        <position position="1126"/>
    </location>
</feature>
<evidence type="ECO:0000250" key="1"/>
<evidence type="ECO:0000250" key="2">
    <source>
        <dbReference type="UniProtKB" id="Q8BHG1"/>
    </source>
</evidence>
<evidence type="ECO:0000255" key="3"/>
<evidence type="ECO:0000255" key="4">
    <source>
        <dbReference type="PROSITE-ProRule" id="PRU10096"/>
    </source>
</evidence>
<evidence type="ECO:0000256" key="5">
    <source>
        <dbReference type="SAM" id="MobiDB-lite"/>
    </source>
</evidence>
<evidence type="ECO:0000269" key="6">
    <source>
    </source>
</evidence>
<evidence type="ECO:0000269" key="7">
    <source>
    </source>
</evidence>
<evidence type="ECO:0000303" key="8">
    <source>
    </source>
</evidence>
<evidence type="ECO:0000305" key="9"/>
<evidence type="ECO:0000312" key="10">
    <source>
        <dbReference type="HGNC" id="HGNC:7995"/>
    </source>
</evidence>
<evidence type="ECO:0007744" key="11">
    <source>
    </source>
</evidence>
<evidence type="ECO:0007744" key="12">
    <source>
    </source>
</evidence>
<evidence type="ECO:0007744" key="13">
    <source>
    </source>
</evidence>
<evidence type="ECO:0007744" key="14">
    <source>
    </source>
</evidence>
<evidence type="ECO:0007744" key="15">
    <source>
    </source>
</evidence>
<reference key="1">
    <citation type="journal article" date="1997" name="Biochem. J.">
        <title>Human and rat testis express two mRNA species encoding variants of NRD convertase, a metalloendopeptidase of the insulinase family.</title>
        <authorList>
            <person name="Hospital V."/>
            <person name="Prat A."/>
            <person name="Joulie C."/>
            <person name="Cherif D."/>
            <person name="Day R."/>
            <person name="Cohen P."/>
        </authorList>
    </citation>
    <scope>NUCLEOTIDE SEQUENCE [MRNA] (ISOFORMS 1 AND 2)</scope>
    <source>
        <tissue>Testis</tissue>
    </source>
</reference>
<reference key="2">
    <citation type="journal article" date="1998" name="Genomics">
        <title>Human NRD convertase: a highly conserved metalloendopeptidase expressed at specific sites during development and in adult tissues.</title>
        <authorList>
            <person name="Fumagalli P."/>
            <person name="Accarino M."/>
            <person name="Egeo A."/>
            <person name="Scartezzini P."/>
            <person name="Rappazzo G."/>
            <person name="Pizzuti A."/>
            <person name="Avvantaggiato V."/>
            <person name="Simeone A."/>
            <person name="Arrigo G."/>
            <person name="Zuffardi O."/>
            <person name="Ottolenghi S."/>
            <person name="Taramelli R."/>
        </authorList>
    </citation>
    <scope>NUCLEOTIDE SEQUENCE [MRNA] (ISOFORM 1)</scope>
    <scope>VARIANT GLU-154 DEL</scope>
    <source>
        <tissue>Heart</tissue>
    </source>
</reference>
<reference key="3">
    <citation type="journal article" date="2006" name="Nature">
        <title>The DNA sequence and biological annotation of human chromosome 1.</title>
        <authorList>
            <person name="Gregory S.G."/>
            <person name="Barlow K.F."/>
            <person name="McLay K.E."/>
            <person name="Kaul R."/>
            <person name="Swarbreck D."/>
            <person name="Dunham A."/>
            <person name="Scott C.E."/>
            <person name="Howe K.L."/>
            <person name="Woodfine K."/>
            <person name="Spencer C.C.A."/>
            <person name="Jones M.C."/>
            <person name="Gillson C."/>
            <person name="Searle S."/>
            <person name="Zhou Y."/>
            <person name="Kokocinski F."/>
            <person name="McDonald L."/>
            <person name="Evans R."/>
            <person name="Phillips K."/>
            <person name="Atkinson A."/>
            <person name="Cooper R."/>
            <person name="Jones C."/>
            <person name="Hall R.E."/>
            <person name="Andrews T.D."/>
            <person name="Lloyd C."/>
            <person name="Ainscough R."/>
            <person name="Almeida J.P."/>
            <person name="Ambrose K.D."/>
            <person name="Anderson F."/>
            <person name="Andrew R.W."/>
            <person name="Ashwell R.I.S."/>
            <person name="Aubin K."/>
            <person name="Babbage A.K."/>
            <person name="Bagguley C.L."/>
            <person name="Bailey J."/>
            <person name="Beasley H."/>
            <person name="Bethel G."/>
            <person name="Bird C.P."/>
            <person name="Bray-Allen S."/>
            <person name="Brown J.Y."/>
            <person name="Brown A.J."/>
            <person name="Buckley D."/>
            <person name="Burton J."/>
            <person name="Bye J."/>
            <person name="Carder C."/>
            <person name="Chapman J.C."/>
            <person name="Clark S.Y."/>
            <person name="Clarke G."/>
            <person name="Clee C."/>
            <person name="Cobley V."/>
            <person name="Collier R.E."/>
            <person name="Corby N."/>
            <person name="Coville G.J."/>
            <person name="Davies J."/>
            <person name="Deadman R."/>
            <person name="Dunn M."/>
            <person name="Earthrowl M."/>
            <person name="Ellington A.G."/>
            <person name="Errington H."/>
            <person name="Frankish A."/>
            <person name="Frankland J."/>
            <person name="French L."/>
            <person name="Garner P."/>
            <person name="Garnett J."/>
            <person name="Gay L."/>
            <person name="Ghori M.R.J."/>
            <person name="Gibson R."/>
            <person name="Gilby L.M."/>
            <person name="Gillett W."/>
            <person name="Glithero R.J."/>
            <person name="Grafham D.V."/>
            <person name="Griffiths C."/>
            <person name="Griffiths-Jones S."/>
            <person name="Grocock R."/>
            <person name="Hammond S."/>
            <person name="Harrison E.S.I."/>
            <person name="Hart E."/>
            <person name="Haugen E."/>
            <person name="Heath P.D."/>
            <person name="Holmes S."/>
            <person name="Holt K."/>
            <person name="Howden P.J."/>
            <person name="Hunt A.R."/>
            <person name="Hunt S.E."/>
            <person name="Hunter G."/>
            <person name="Isherwood J."/>
            <person name="James R."/>
            <person name="Johnson C."/>
            <person name="Johnson D."/>
            <person name="Joy A."/>
            <person name="Kay M."/>
            <person name="Kershaw J.K."/>
            <person name="Kibukawa M."/>
            <person name="Kimberley A.M."/>
            <person name="King A."/>
            <person name="Knights A.J."/>
            <person name="Lad H."/>
            <person name="Laird G."/>
            <person name="Lawlor S."/>
            <person name="Leongamornlert D.A."/>
            <person name="Lloyd D.M."/>
            <person name="Loveland J."/>
            <person name="Lovell J."/>
            <person name="Lush M.J."/>
            <person name="Lyne R."/>
            <person name="Martin S."/>
            <person name="Mashreghi-Mohammadi M."/>
            <person name="Matthews L."/>
            <person name="Matthews N.S.W."/>
            <person name="McLaren S."/>
            <person name="Milne S."/>
            <person name="Mistry S."/>
            <person name="Moore M.J.F."/>
            <person name="Nickerson T."/>
            <person name="O'Dell C.N."/>
            <person name="Oliver K."/>
            <person name="Palmeiri A."/>
            <person name="Palmer S.A."/>
            <person name="Parker A."/>
            <person name="Patel D."/>
            <person name="Pearce A.V."/>
            <person name="Peck A.I."/>
            <person name="Pelan S."/>
            <person name="Phelps K."/>
            <person name="Phillimore B.J."/>
            <person name="Plumb R."/>
            <person name="Rajan J."/>
            <person name="Raymond C."/>
            <person name="Rouse G."/>
            <person name="Saenphimmachak C."/>
            <person name="Sehra H.K."/>
            <person name="Sheridan E."/>
            <person name="Shownkeen R."/>
            <person name="Sims S."/>
            <person name="Skuce C.D."/>
            <person name="Smith M."/>
            <person name="Steward C."/>
            <person name="Subramanian S."/>
            <person name="Sycamore N."/>
            <person name="Tracey A."/>
            <person name="Tromans A."/>
            <person name="Van Helmond Z."/>
            <person name="Wall M."/>
            <person name="Wallis J.M."/>
            <person name="White S."/>
            <person name="Whitehead S.L."/>
            <person name="Wilkinson J.E."/>
            <person name="Willey D.L."/>
            <person name="Williams H."/>
            <person name="Wilming L."/>
            <person name="Wray P.W."/>
            <person name="Wu Z."/>
            <person name="Coulson A."/>
            <person name="Vaudin M."/>
            <person name="Sulston J.E."/>
            <person name="Durbin R.M."/>
            <person name="Hubbard T."/>
            <person name="Wooster R."/>
            <person name="Dunham I."/>
            <person name="Carter N.P."/>
            <person name="McVean G."/>
            <person name="Ross M.T."/>
            <person name="Harrow J."/>
            <person name="Olson M.V."/>
            <person name="Beck S."/>
            <person name="Rogers J."/>
            <person name="Bentley D.R."/>
        </authorList>
    </citation>
    <scope>NUCLEOTIDE SEQUENCE [LARGE SCALE GENOMIC DNA]</scope>
</reference>
<reference key="4">
    <citation type="submission" date="2005-09" db="EMBL/GenBank/DDBJ databases">
        <authorList>
            <person name="Mural R.J."/>
            <person name="Istrail S."/>
            <person name="Sutton G.G."/>
            <person name="Florea L."/>
            <person name="Halpern A.L."/>
            <person name="Mobarry C.M."/>
            <person name="Lippert R."/>
            <person name="Walenz B."/>
            <person name="Shatkay H."/>
            <person name="Dew I."/>
            <person name="Miller J.R."/>
            <person name="Flanigan M.J."/>
            <person name="Edwards N.J."/>
            <person name="Bolanos R."/>
            <person name="Fasulo D."/>
            <person name="Halldorsson B.V."/>
            <person name="Hannenhalli S."/>
            <person name="Turner R."/>
            <person name="Yooseph S."/>
            <person name="Lu F."/>
            <person name="Nusskern D.R."/>
            <person name="Shue B.C."/>
            <person name="Zheng X.H."/>
            <person name="Zhong F."/>
            <person name="Delcher A.L."/>
            <person name="Huson D.H."/>
            <person name="Kravitz S.A."/>
            <person name="Mouchard L."/>
            <person name="Reinert K."/>
            <person name="Remington K.A."/>
            <person name="Clark A.G."/>
            <person name="Waterman M.S."/>
            <person name="Eichler E.E."/>
            <person name="Adams M.D."/>
            <person name="Hunkapiller M.W."/>
            <person name="Myers E.W."/>
            <person name="Venter J.C."/>
        </authorList>
    </citation>
    <scope>NUCLEOTIDE SEQUENCE [LARGE SCALE GENOMIC DNA]</scope>
</reference>
<reference key="5">
    <citation type="journal article" date="2004" name="Genome Res.">
        <title>The status, quality, and expansion of the NIH full-length cDNA project: the Mammalian Gene Collection (MGC).</title>
        <authorList>
            <consortium name="The MGC Project Team"/>
        </authorList>
    </citation>
    <scope>NUCLEOTIDE SEQUENCE [LARGE SCALE MRNA] (ISOFORM 1)</scope>
    <source>
        <tissue>Placenta</tissue>
    </source>
</reference>
<reference key="6">
    <citation type="journal article" date="2000" name="Biochem. J.">
        <title>Gene expression of the dibasic-pair cleaving enzyme NRD convertase (N-arginine dibasic convertase) is differentially regulated in the GH3 pituitary and Mat-Lu prostate cell lines.</title>
        <authorList>
            <person name="Winter A.G."/>
            <person name="Pierotti A.R."/>
        </authorList>
    </citation>
    <scope>NUCLEOTIDE SEQUENCE [GENOMIC DNA] OF 1-107</scope>
</reference>
<reference key="7">
    <citation type="journal article" date="2008" name="Proc. Natl. Acad. Sci. U.S.A.">
        <title>A quantitative atlas of mitotic phosphorylation.</title>
        <authorList>
            <person name="Dephoure N."/>
            <person name="Zhou C."/>
            <person name="Villen J."/>
            <person name="Beausoleil S.A."/>
            <person name="Bakalarski C.E."/>
            <person name="Elledge S.J."/>
            <person name="Gygi S.P."/>
        </authorList>
    </citation>
    <scope>PHOSPHORYLATION [LARGE SCALE ANALYSIS] AT SER-94</scope>
    <scope>IDENTIFICATION BY MASS SPECTROMETRY [LARGE SCALE ANALYSIS]</scope>
    <source>
        <tissue>Cervix carcinoma</tissue>
    </source>
</reference>
<reference key="8">
    <citation type="journal article" date="2009" name="Sci. Signal.">
        <title>Quantitative phosphoproteomic analysis of T cell receptor signaling reveals system-wide modulation of protein-protein interactions.</title>
        <authorList>
            <person name="Mayya V."/>
            <person name="Lundgren D.H."/>
            <person name="Hwang S.-I."/>
            <person name="Rezaul K."/>
            <person name="Wu L."/>
            <person name="Eng J.K."/>
            <person name="Rodionov V."/>
            <person name="Han D.K."/>
        </authorList>
    </citation>
    <scope>PHOSPHORYLATION [LARGE SCALE ANALYSIS] AT SER-94</scope>
    <scope>IDENTIFICATION BY MASS SPECTROMETRY [LARGE SCALE ANALYSIS]</scope>
    <source>
        <tissue>Leukemic T-cell</tissue>
    </source>
</reference>
<reference key="9">
    <citation type="journal article" date="2010" name="Sci. Signal.">
        <title>Quantitative phosphoproteomics reveals widespread full phosphorylation site occupancy during mitosis.</title>
        <authorList>
            <person name="Olsen J.V."/>
            <person name="Vermeulen M."/>
            <person name="Santamaria A."/>
            <person name="Kumar C."/>
            <person name="Miller M.L."/>
            <person name="Jensen L.J."/>
            <person name="Gnad F."/>
            <person name="Cox J."/>
            <person name="Jensen T.S."/>
            <person name="Nigg E.A."/>
            <person name="Brunak S."/>
            <person name="Mann M."/>
        </authorList>
    </citation>
    <scope>PHOSPHORYLATION [LARGE SCALE ANALYSIS] AT SER-94</scope>
    <scope>IDENTIFICATION BY MASS SPECTROMETRY [LARGE SCALE ANALYSIS]</scope>
    <source>
        <tissue>Cervix carcinoma</tissue>
    </source>
</reference>
<reference key="10">
    <citation type="journal article" date="2011" name="BMC Syst. Biol.">
        <title>Initial characterization of the human central proteome.</title>
        <authorList>
            <person name="Burkard T.R."/>
            <person name="Planyavsky M."/>
            <person name="Kaupe I."/>
            <person name="Breitwieser F.P."/>
            <person name="Buerckstuemmer T."/>
            <person name="Bennett K.L."/>
            <person name="Superti-Furga G."/>
            <person name="Colinge J."/>
        </authorList>
    </citation>
    <scope>IDENTIFICATION BY MASS SPECTROMETRY [LARGE SCALE ANALYSIS]</scope>
</reference>
<reference key="11">
    <citation type="journal article" date="2011" name="Sci. Signal.">
        <title>System-wide temporal characterization of the proteome and phosphoproteome of human embryonic stem cell differentiation.</title>
        <authorList>
            <person name="Rigbolt K.T."/>
            <person name="Prokhorova T.A."/>
            <person name="Akimov V."/>
            <person name="Henningsen J."/>
            <person name="Johansen P.T."/>
            <person name="Kratchmarova I."/>
            <person name="Kassem M."/>
            <person name="Mann M."/>
            <person name="Olsen J.V."/>
            <person name="Blagoev B."/>
        </authorList>
    </citation>
    <scope>PHOSPHORYLATION [LARGE SCALE ANALYSIS] AT SER-94</scope>
    <scope>IDENTIFICATION BY MASS SPECTROMETRY [LARGE SCALE ANALYSIS]</scope>
</reference>
<reference key="12">
    <citation type="journal article" date="2013" name="J. Proteome Res.">
        <title>Toward a comprehensive characterization of a human cancer cell phosphoproteome.</title>
        <authorList>
            <person name="Zhou H."/>
            <person name="Di Palma S."/>
            <person name="Preisinger C."/>
            <person name="Peng M."/>
            <person name="Polat A.N."/>
            <person name="Heck A.J."/>
            <person name="Mohammed S."/>
        </authorList>
    </citation>
    <scope>PHOSPHORYLATION [LARGE SCALE ANALYSIS] AT SER-86; SER-94 AND SER-96</scope>
    <scope>IDENTIFICATION BY MASS SPECTROMETRY [LARGE SCALE ANALYSIS]</scope>
    <source>
        <tissue>Cervix carcinoma</tissue>
        <tissue>Erythroleukemia</tissue>
    </source>
</reference>
<reference key="13">
    <citation type="journal article" date="2014" name="J. Proteomics">
        <title>An enzyme assisted RP-RPLC approach for in-depth analysis of human liver phosphoproteome.</title>
        <authorList>
            <person name="Bian Y."/>
            <person name="Song C."/>
            <person name="Cheng K."/>
            <person name="Dong M."/>
            <person name="Wang F."/>
            <person name="Huang J."/>
            <person name="Sun D."/>
            <person name="Wang L."/>
            <person name="Ye M."/>
            <person name="Zou H."/>
        </authorList>
    </citation>
    <scope>IDENTIFICATION BY MASS SPECTROMETRY [LARGE SCALE ANALYSIS]</scope>
    <source>
        <tissue>Liver</tissue>
    </source>
</reference>
<reference key="14">
    <citation type="journal article" date="2017" name="Neuron">
        <title>Loss of Nardilysin, a Mitochondrial Co-chaperone for alpha-Ketoglutarate Dehydrogenase, Promotes mTORC1 Activation and Neurodegeneration.</title>
        <authorList>
            <person name="Yoon W.H."/>
            <person name="Sandoval H."/>
            <person name="Nagarkar-Jaiswal S."/>
            <person name="Jaiswal M."/>
            <person name="Yamamoto S."/>
            <person name="Haelterman N.A."/>
            <person name="Putluri N."/>
            <person name="Putluri V."/>
            <person name="Sreekumar A."/>
            <person name="Tos T."/>
            <person name="Aksoy A."/>
            <person name="Donti T."/>
            <person name="Graham B.H."/>
            <person name="Ohno M."/>
            <person name="Nishi E."/>
            <person name="Hunter J."/>
            <person name="Muzny D.M."/>
            <person name="Carmichael J."/>
            <person name="Shen J."/>
            <person name="Arboleda V.A."/>
            <person name="Nelson S.F."/>
            <person name="Wangler M.F."/>
            <person name="Karaca E."/>
            <person name="Lupski J.R."/>
            <person name="Bellen H.J."/>
        </authorList>
    </citation>
    <scope>SUBCELLULAR LOCATION</scope>
</reference>
<name>NRDC_HUMAN</name>
<sequence>MLRRVTVAAVCATRRKLCEAGRELAALWGIETRGRCEDSAAARPFPILAMPGRNKAKSTCSCPDLQPNGQDLGENSRVARLGADESEEEGRRGSLSNAGDPEIVKSPSDPKQYRYIKLQNGLQALLISDLSNMEGKTGNTTDDEEEEEVEEEEEDDDEDSGAEIEDDDEEGFDDEDEFDDEHDDDLDTEDNELEELEERAEARKKTTEKQSAAALCVGVGSFADPDDLPGLAHFLEHMVFMGSLKYPDENGFDAFLKKHGGSDNASTDCERTVFQFDVQRKYFKEALDRWAQFFIHPLMIRDAIDREVEAVDSEYQLARPSDANRKEMLFGSLARPGHPMGKFFWGNAETLKHEPRKNNIDTHARLREFWMRYYSSHYMTLVVQSKETLDTLEKWVTEIFSQIPNNGLPRPNFGHLTDPFDTPAFNKLYRVVPIRKIHALTITWALPPQQQHYRVKPLHYISWLVGHEGKGSILSFLRKKCWALALFGGNGETGFEQNSTYSVFSISITLTDEGYEHFYEVAYTVFQYLKMLQKLGPEKRIFEEIRKIEDNEFHYQEQTDPVEYVENMCENMQLYPLQDILTGDQLLFEYKPEVIGEALNQLVPQKANLVLLSGANEGKCDLKEKWFGTQYSIEDIENSWAELWNSNFELNPDLHLPAENKYIATDFTLKAFDCPETEYPVKIVNTPQGCLWYKKDNKFKIPKAYIRFHLISPLIQKSAANVVLFDIFVNILTHNLAEPAYEADVAQLEYKLVAGEHGLIIRVKGFNHKLPLLFQLIIDYLAEFNSTPAVFTMITEQLKKTYFNILIKPETLAKDVRLLILEYARWSMIDKYQALMDGLSLESLLSFVKEFKSQLFVEGLVQGNVTSTESMDFLKYVVDKLNFKPLEQEMPVQFQVVELPSGHHLCKVKALNKGDANSEVTVYYQSGTRSLREYTLMELLVMHMEEPCFDFLRTKQTLGYHVYPTCRNTSGILGFSVTVGTQATKYNSEVVDKKIEEFLSSFEEKIENLTEEAFNTQVTALIKLKECEDTHLGEEVDRNWNEVVTQQYLFDRLAHEIEALKSFSKSDLVNWFKAHRGPGSKMLSVHVVGYGKYELEEDGTPSSEDSNSSCEVMQLTYLPTSPLLADCIIPITDIRAFTTTLNLLPYHKIVK</sequence>
<dbReference type="EC" id="3.4.24.61"/>
<dbReference type="EMBL" id="X93207">
    <property type="protein sequence ID" value="CAA63694.1"/>
    <property type="molecule type" value="mRNA"/>
</dbReference>
<dbReference type="EMBL" id="X93209">
    <property type="protein sequence ID" value="CAA63698.1"/>
    <property type="molecule type" value="mRNA"/>
</dbReference>
<dbReference type="EMBL" id="U64898">
    <property type="protein sequence ID" value="AAC39597.1"/>
    <property type="status" value="ALT_FRAME"/>
    <property type="molecule type" value="mRNA"/>
</dbReference>
<dbReference type="EMBL" id="AL050343">
    <property type="status" value="NOT_ANNOTATED_CDS"/>
    <property type="molecule type" value="Genomic_DNA"/>
</dbReference>
<dbReference type="EMBL" id="AL589663">
    <property type="status" value="NOT_ANNOTATED_CDS"/>
    <property type="molecule type" value="Genomic_DNA"/>
</dbReference>
<dbReference type="EMBL" id="CH471059">
    <property type="protein sequence ID" value="EAX06809.1"/>
    <property type="molecule type" value="Genomic_DNA"/>
</dbReference>
<dbReference type="EMBL" id="BC008775">
    <property type="protein sequence ID" value="AAH08775.1"/>
    <property type="molecule type" value="mRNA"/>
</dbReference>
<dbReference type="EMBL" id="AJ000350">
    <property type="protein sequence ID" value="CAA04025.1"/>
    <property type="molecule type" value="Genomic_DNA"/>
</dbReference>
<dbReference type="CCDS" id="CCDS41335.1">
    <molecule id="O43847-1"/>
</dbReference>
<dbReference type="CCDS" id="CCDS559.1">
    <molecule id="O43847-2"/>
</dbReference>
<dbReference type="RefSeq" id="NP_001095132.1">
    <molecule id="O43847-1"/>
    <property type="nucleotide sequence ID" value="NM_001101662.2"/>
</dbReference>
<dbReference type="RefSeq" id="NP_001229290.1">
    <property type="nucleotide sequence ID" value="NM_001242361.1"/>
</dbReference>
<dbReference type="RefSeq" id="NP_002516.2">
    <molecule id="O43847-2"/>
    <property type="nucleotide sequence ID" value="NM_002525.3"/>
</dbReference>
<dbReference type="SMR" id="O43847"/>
<dbReference type="BioGRID" id="110954">
    <property type="interactions" value="139"/>
</dbReference>
<dbReference type="FunCoup" id="O43847">
    <property type="interactions" value="1999"/>
</dbReference>
<dbReference type="IntAct" id="O43847">
    <property type="interactions" value="62"/>
</dbReference>
<dbReference type="MINT" id="O43847"/>
<dbReference type="STRING" id="9606.ENSP00000346890"/>
<dbReference type="MEROPS" id="M16.005"/>
<dbReference type="MEROPS" id="M16.983"/>
<dbReference type="MEROPS" id="M16.987"/>
<dbReference type="GlyGen" id="O43847">
    <property type="glycosylation" value="1 site, 1 O-linked glycan (1 site)"/>
</dbReference>
<dbReference type="iPTMnet" id="O43847"/>
<dbReference type="MetOSite" id="O43847"/>
<dbReference type="PhosphoSitePlus" id="O43847"/>
<dbReference type="BioMuta" id="NRDC"/>
<dbReference type="jPOST" id="O43847"/>
<dbReference type="MassIVE" id="O43847"/>
<dbReference type="PaxDb" id="9606-ENSP00000346890"/>
<dbReference type="PeptideAtlas" id="O43847"/>
<dbReference type="ProteomicsDB" id="49200">
    <molecule id="O43847-1"/>
</dbReference>
<dbReference type="ProteomicsDB" id="49201">
    <molecule id="O43847-2"/>
</dbReference>
<dbReference type="Pumba" id="O43847"/>
<dbReference type="Antibodypedia" id="19043">
    <property type="antibodies" value="153 antibodies from 26 providers"/>
</dbReference>
<dbReference type="DNASU" id="4898"/>
<dbReference type="Ensembl" id="ENST00000352171.12">
    <molecule id="O43847-1"/>
    <property type="protein sequence ID" value="ENSP00000262679.8"/>
    <property type="gene ID" value="ENSG00000078618.23"/>
</dbReference>
<dbReference type="Ensembl" id="ENST00000354831.11">
    <molecule id="O43847-2"/>
    <property type="protein sequence ID" value="ENSP00000346890.7"/>
    <property type="gene ID" value="ENSG00000078618.23"/>
</dbReference>
<dbReference type="GeneID" id="4898"/>
<dbReference type="KEGG" id="hsa:4898"/>
<dbReference type="MANE-Select" id="ENST00000352171.12">
    <property type="protein sequence ID" value="ENSP00000262679.8"/>
    <property type="RefSeq nucleotide sequence ID" value="NM_001101662.2"/>
    <property type="RefSeq protein sequence ID" value="NP_001095132.1"/>
</dbReference>
<dbReference type="UCSC" id="uc001ctd.5">
    <molecule id="O43847-1"/>
    <property type="organism name" value="human"/>
</dbReference>
<dbReference type="AGR" id="HGNC:7995"/>
<dbReference type="CTD" id="4898"/>
<dbReference type="DisGeNET" id="4898"/>
<dbReference type="GeneCards" id="NRDC"/>
<dbReference type="HGNC" id="HGNC:7995">
    <property type="gene designation" value="NRDC"/>
</dbReference>
<dbReference type="HPA" id="ENSG00000078618">
    <property type="expression patterns" value="Tissue enhanced (skeletal)"/>
</dbReference>
<dbReference type="MalaCards" id="NRDC"/>
<dbReference type="MIM" id="602651">
    <property type="type" value="gene"/>
</dbReference>
<dbReference type="neXtProt" id="NX_O43847"/>
<dbReference type="OpenTargets" id="ENSG00000078618"/>
<dbReference type="PharmGKB" id="PA31774"/>
<dbReference type="VEuPathDB" id="HostDB:ENSG00000078618"/>
<dbReference type="eggNOG" id="KOG0959">
    <property type="taxonomic scope" value="Eukaryota"/>
</dbReference>
<dbReference type="GeneTree" id="ENSGT00940000155026"/>
<dbReference type="InParanoid" id="O43847"/>
<dbReference type="OMA" id="INQVMEH"/>
<dbReference type="OrthoDB" id="4953at2759"/>
<dbReference type="PAN-GO" id="O43847">
    <property type="GO annotations" value="1 GO annotation based on evolutionary models"/>
</dbReference>
<dbReference type="PhylomeDB" id="O43847"/>
<dbReference type="BRENDA" id="3.4.24.61">
    <property type="organism ID" value="2681"/>
</dbReference>
<dbReference type="PathwayCommons" id="O43847"/>
<dbReference type="SignaLink" id="O43847"/>
<dbReference type="BioGRID-ORCS" id="4898">
    <property type="hits" value="120 hits in 1144 CRISPR screens"/>
</dbReference>
<dbReference type="ChiTaRS" id="NRDC">
    <property type="organism name" value="human"/>
</dbReference>
<dbReference type="GeneWiki" id="NRD1"/>
<dbReference type="GenomeRNAi" id="4898"/>
<dbReference type="Pharos" id="O43847">
    <property type="development level" value="Tbio"/>
</dbReference>
<dbReference type="PRO" id="PR:O43847"/>
<dbReference type="Proteomes" id="UP000005640">
    <property type="component" value="Chromosome 1"/>
</dbReference>
<dbReference type="RNAct" id="O43847">
    <property type="molecule type" value="protein"/>
</dbReference>
<dbReference type="Bgee" id="ENSG00000078618">
    <property type="expression patterns" value="Expressed in gluteal muscle and 209 other cell types or tissues"/>
</dbReference>
<dbReference type="ExpressionAtlas" id="O43847">
    <property type="expression patterns" value="baseline and differential"/>
</dbReference>
<dbReference type="GO" id="GO:0009986">
    <property type="term" value="C:cell surface"/>
    <property type="evidence" value="ECO:0000304"/>
    <property type="project" value="UniProtKB"/>
</dbReference>
<dbReference type="GO" id="GO:0005829">
    <property type="term" value="C:cytosol"/>
    <property type="evidence" value="ECO:0000304"/>
    <property type="project" value="UniProtKB"/>
</dbReference>
<dbReference type="GO" id="GO:0030425">
    <property type="term" value="C:dendrite"/>
    <property type="evidence" value="ECO:0007669"/>
    <property type="project" value="UniProtKB-SubCell"/>
</dbReference>
<dbReference type="GO" id="GO:0005759">
    <property type="term" value="C:mitochondrial matrix"/>
    <property type="evidence" value="ECO:0000314"/>
    <property type="project" value="FlyBase"/>
</dbReference>
<dbReference type="GO" id="GO:0061133">
    <property type="term" value="F:endopeptidase activator activity"/>
    <property type="evidence" value="ECO:0000314"/>
    <property type="project" value="BHF-UCL"/>
</dbReference>
<dbReference type="GO" id="GO:0048408">
    <property type="term" value="F:epidermal growth factor binding"/>
    <property type="evidence" value="ECO:0000304"/>
    <property type="project" value="UniProtKB"/>
</dbReference>
<dbReference type="GO" id="GO:0046872">
    <property type="term" value="F:metal ion binding"/>
    <property type="evidence" value="ECO:0007669"/>
    <property type="project" value="UniProtKB-KW"/>
</dbReference>
<dbReference type="GO" id="GO:0004222">
    <property type="term" value="F:metalloendopeptidase activity"/>
    <property type="evidence" value="ECO:0000303"/>
    <property type="project" value="UniProtKB"/>
</dbReference>
<dbReference type="GO" id="GO:0120163">
    <property type="term" value="P:negative regulation of cold-induced thermogenesis"/>
    <property type="evidence" value="ECO:0000250"/>
    <property type="project" value="YuBioLab"/>
</dbReference>
<dbReference type="GO" id="GO:0050772">
    <property type="term" value="P:positive regulation of axonogenesis"/>
    <property type="evidence" value="ECO:0000250"/>
    <property type="project" value="UniProtKB"/>
</dbReference>
<dbReference type="GO" id="GO:0051044">
    <property type="term" value="P:positive regulation of membrane protein ectodomain proteolysis"/>
    <property type="evidence" value="ECO:0000314"/>
    <property type="project" value="BHF-UCL"/>
</dbReference>
<dbReference type="GO" id="GO:0031643">
    <property type="term" value="P:positive regulation of myelination"/>
    <property type="evidence" value="ECO:0000250"/>
    <property type="project" value="UniProtKB"/>
</dbReference>
<dbReference type="GO" id="GO:0032760">
    <property type="term" value="P:positive regulation of tumor necrosis factor production"/>
    <property type="evidence" value="ECO:0000314"/>
    <property type="project" value="ARUK-UCL"/>
</dbReference>
<dbReference type="GO" id="GO:1903265">
    <property type="term" value="P:positive regulation of tumor necrosis factor-mediated signaling pathway"/>
    <property type="evidence" value="ECO:0000314"/>
    <property type="project" value="ARUK-UCL"/>
</dbReference>
<dbReference type="GO" id="GO:0006508">
    <property type="term" value="P:proteolysis"/>
    <property type="evidence" value="ECO:0007669"/>
    <property type="project" value="UniProtKB-KW"/>
</dbReference>
<dbReference type="FunFam" id="3.30.830.10:FF:000005">
    <property type="entry name" value="nardilysin isoform X1"/>
    <property type="match status" value="1"/>
</dbReference>
<dbReference type="FunFam" id="3.30.830.10:FF:000017">
    <property type="entry name" value="nardilysin isoform X1"/>
    <property type="match status" value="1"/>
</dbReference>
<dbReference type="FunFam" id="3.30.830.10:FF:000019">
    <property type="entry name" value="nardilysin isoform X1"/>
    <property type="match status" value="1"/>
</dbReference>
<dbReference type="Gene3D" id="3.30.830.10">
    <property type="entry name" value="Metalloenzyme, LuxS/M16 peptidase-like"/>
    <property type="match status" value="4"/>
</dbReference>
<dbReference type="InterPro" id="IPR011249">
    <property type="entry name" value="Metalloenz_LuxS/M16"/>
</dbReference>
<dbReference type="InterPro" id="IPR011765">
    <property type="entry name" value="Pept_M16_N"/>
</dbReference>
<dbReference type="InterPro" id="IPR001431">
    <property type="entry name" value="Pept_M16_Zn_BS"/>
</dbReference>
<dbReference type="InterPro" id="IPR050626">
    <property type="entry name" value="Peptidase_M16"/>
</dbReference>
<dbReference type="InterPro" id="IPR007863">
    <property type="entry name" value="Peptidase_M16_C"/>
</dbReference>
<dbReference type="InterPro" id="IPR032632">
    <property type="entry name" value="Peptidase_M16_M"/>
</dbReference>
<dbReference type="PANTHER" id="PTHR43690:SF18">
    <property type="entry name" value="INSULIN-DEGRADING ENZYME-RELATED"/>
    <property type="match status" value="1"/>
</dbReference>
<dbReference type="PANTHER" id="PTHR43690">
    <property type="entry name" value="NARDILYSIN"/>
    <property type="match status" value="1"/>
</dbReference>
<dbReference type="Pfam" id="PF00675">
    <property type="entry name" value="Peptidase_M16"/>
    <property type="match status" value="1"/>
</dbReference>
<dbReference type="Pfam" id="PF05193">
    <property type="entry name" value="Peptidase_M16_C"/>
    <property type="match status" value="2"/>
</dbReference>
<dbReference type="Pfam" id="PF16187">
    <property type="entry name" value="Peptidase_M16_M"/>
    <property type="match status" value="1"/>
</dbReference>
<dbReference type="SUPFAM" id="SSF63411">
    <property type="entry name" value="LuxS/MPP-like metallohydrolase"/>
    <property type="match status" value="4"/>
</dbReference>
<dbReference type="PROSITE" id="PS00143">
    <property type="entry name" value="INSULINASE"/>
    <property type="match status" value="1"/>
</dbReference>
<accession>O43847</accession>
<accession>A6NI41</accession>
<accession>O15241</accession>
<accession>O15242</accession>
<accession>Q5VUL0</accession>
<accession>Q96HB2</accession>
<accession>Q9NU57</accession>
<protein>
    <recommendedName>
        <fullName>Nardilysin</fullName>
        <ecNumber>3.4.24.61</ecNumber>
    </recommendedName>
    <alternativeName>
        <fullName>N-arginine dibasic convertase</fullName>
        <shortName>NRD convertase</shortName>
        <shortName>NRD-C</shortName>
    </alternativeName>
    <alternativeName>
        <fullName evidence="10">Nardilysin convertase</fullName>
    </alternativeName>
</protein>
<comment type="function">
    <text evidence="2">Cleaves peptide substrates on the N-terminus of arginine residues in dibasic pairs. Is a critical activator of BACE1- and ADAM17-mediated pro-neuregulin ectodomain shedding, involved in the positive regulation of axonal maturation and myelination. Required for proper functioning of 2-oxoglutarate dehydrogenase (OGDH) (By similarity).</text>
</comment>
<comment type="catalytic activity">
    <reaction>
        <text>Hydrolysis of polypeptides, preferably at -Xaa-|-Arg-Lys-, and less commonly at -Arg-|-Arg-Xaa-, in which Xaa is not Arg or Lys.</text>
        <dbReference type="EC" id="3.4.24.61"/>
    </reaction>
</comment>
<comment type="cofactor">
    <cofactor evidence="1">
        <name>Zn(2+)</name>
        <dbReference type="ChEBI" id="CHEBI:29105"/>
    </cofactor>
    <text evidence="1">Binds 1 zinc ion per subunit.</text>
</comment>
<comment type="subunit">
    <text evidence="2">Interacts with BACE1 and NRG1.</text>
</comment>
<comment type="interaction">
    <interactant intactId="EBI-2371631">
        <id>O43847</id>
    </interactant>
    <interactant intactId="EBI-366083">
        <id>P04637</id>
        <label>TP53</label>
    </interactant>
    <organismsDiffer>false</organismsDiffer>
    <experiments>6</experiments>
</comment>
<comment type="subcellular location">
    <subcellularLocation>
        <location evidence="6">Mitochondrion</location>
    </subcellularLocation>
    <subcellularLocation>
        <location evidence="2">Cell projection</location>
        <location evidence="2">Dendrite</location>
    </subcellularLocation>
</comment>
<comment type="alternative products">
    <event type="alternative splicing"/>
    <isoform>
        <id>O43847-1</id>
        <name>1</name>
        <name>NRD1</name>
        <sequence type="displayed"/>
    </isoform>
    <isoform>
        <id>O43847-2</id>
        <name>2</name>
        <name>NRD2</name>
        <sequence type="described" ref="VSP_007114"/>
    </isoform>
</comment>
<comment type="tissue specificity">
    <text>Primarily in adult heart, skeletal muscle, and testis and at much lower levels in other tissues.</text>
</comment>
<comment type="similarity">
    <text evidence="9">Belongs to the peptidase M16 family.</text>
</comment>
<comment type="sequence caution" evidence="9">
    <conflict type="frameshift">
        <sequence resource="EMBL-CDS" id="AAC39597"/>
    </conflict>
</comment>
<gene>
    <name evidence="10" type="primary">NRDC</name>
    <name type="synonym">NRD1</name>
</gene>
<proteinExistence type="evidence at protein level"/>